<evidence type="ECO:0000255" key="1">
    <source>
        <dbReference type="HAMAP-Rule" id="MF_00260"/>
    </source>
</evidence>
<dbReference type="EC" id="2.5.1.61" evidence="1"/>
<dbReference type="EMBL" id="CP000660">
    <property type="protein sequence ID" value="ABP51791.1"/>
    <property type="molecule type" value="Genomic_DNA"/>
</dbReference>
<dbReference type="SMR" id="A4WN24"/>
<dbReference type="STRING" id="340102.Pars_2245"/>
<dbReference type="KEGG" id="pas:Pars_2245"/>
<dbReference type="HOGENOM" id="CLU_019704_0_2_2"/>
<dbReference type="OrthoDB" id="8042at2157"/>
<dbReference type="PhylomeDB" id="A4WN24"/>
<dbReference type="UniPathway" id="UPA00251">
    <property type="reaction ID" value="UER00319"/>
</dbReference>
<dbReference type="Proteomes" id="UP000001567">
    <property type="component" value="Chromosome"/>
</dbReference>
<dbReference type="GO" id="GO:0005737">
    <property type="term" value="C:cytoplasm"/>
    <property type="evidence" value="ECO:0007669"/>
    <property type="project" value="TreeGrafter"/>
</dbReference>
<dbReference type="GO" id="GO:0004418">
    <property type="term" value="F:hydroxymethylbilane synthase activity"/>
    <property type="evidence" value="ECO:0007669"/>
    <property type="project" value="UniProtKB-UniRule"/>
</dbReference>
<dbReference type="GO" id="GO:0006782">
    <property type="term" value="P:protoporphyrinogen IX biosynthetic process"/>
    <property type="evidence" value="ECO:0007669"/>
    <property type="project" value="UniProtKB-UniRule"/>
</dbReference>
<dbReference type="CDD" id="cd13644">
    <property type="entry name" value="PBP2_HemC_archaea"/>
    <property type="match status" value="1"/>
</dbReference>
<dbReference type="FunFam" id="3.40.190.10:FF:000005">
    <property type="entry name" value="Porphobilinogen deaminase"/>
    <property type="match status" value="1"/>
</dbReference>
<dbReference type="Gene3D" id="3.40.190.10">
    <property type="entry name" value="Periplasmic binding protein-like II"/>
    <property type="match status" value="2"/>
</dbReference>
<dbReference type="Gene3D" id="3.30.160.40">
    <property type="entry name" value="Porphobilinogen deaminase, C-terminal domain"/>
    <property type="match status" value="1"/>
</dbReference>
<dbReference type="HAMAP" id="MF_00260">
    <property type="entry name" value="Porphobil_deam"/>
    <property type="match status" value="1"/>
</dbReference>
<dbReference type="InterPro" id="IPR000860">
    <property type="entry name" value="HemC"/>
</dbReference>
<dbReference type="InterPro" id="IPR022419">
    <property type="entry name" value="Porphobilin_deaminase_cofac_BS"/>
</dbReference>
<dbReference type="InterPro" id="IPR022417">
    <property type="entry name" value="Porphobilin_deaminase_N"/>
</dbReference>
<dbReference type="InterPro" id="IPR022418">
    <property type="entry name" value="Porphobilinogen_deaminase_C"/>
</dbReference>
<dbReference type="InterPro" id="IPR036803">
    <property type="entry name" value="Porphobilinogen_deaminase_C_sf"/>
</dbReference>
<dbReference type="NCBIfam" id="TIGR00212">
    <property type="entry name" value="hemC"/>
    <property type="match status" value="1"/>
</dbReference>
<dbReference type="PANTHER" id="PTHR11557">
    <property type="entry name" value="PORPHOBILINOGEN DEAMINASE"/>
    <property type="match status" value="1"/>
</dbReference>
<dbReference type="PANTHER" id="PTHR11557:SF0">
    <property type="entry name" value="PORPHOBILINOGEN DEAMINASE"/>
    <property type="match status" value="1"/>
</dbReference>
<dbReference type="Pfam" id="PF01379">
    <property type="entry name" value="Porphobil_deam"/>
    <property type="match status" value="1"/>
</dbReference>
<dbReference type="Pfam" id="PF03900">
    <property type="entry name" value="Porphobil_deamC"/>
    <property type="match status" value="1"/>
</dbReference>
<dbReference type="PIRSF" id="PIRSF001438">
    <property type="entry name" value="4pyrrol_synth_OHMeBilane_synth"/>
    <property type="match status" value="1"/>
</dbReference>
<dbReference type="PRINTS" id="PR00151">
    <property type="entry name" value="PORPHBDMNASE"/>
</dbReference>
<dbReference type="SUPFAM" id="SSF53850">
    <property type="entry name" value="Periplasmic binding protein-like II"/>
    <property type="match status" value="1"/>
</dbReference>
<dbReference type="SUPFAM" id="SSF54782">
    <property type="entry name" value="Porphobilinogen deaminase (hydroxymethylbilane synthase), C-terminal domain"/>
    <property type="match status" value="1"/>
</dbReference>
<dbReference type="PROSITE" id="PS00533">
    <property type="entry name" value="PORPHOBILINOGEN_DEAM"/>
    <property type="match status" value="1"/>
</dbReference>
<keyword id="KW-0627">Porphyrin biosynthesis</keyword>
<keyword id="KW-0808">Transferase</keyword>
<accession>A4WN24</accession>
<proteinExistence type="inferred from homology"/>
<organism>
    <name type="scientific">Pyrobaculum arsenaticum (strain DSM 13514 / JCM 11321 / PZ6)</name>
    <dbReference type="NCBI Taxonomy" id="340102"/>
    <lineage>
        <taxon>Archaea</taxon>
        <taxon>Thermoproteota</taxon>
        <taxon>Thermoprotei</taxon>
        <taxon>Thermoproteales</taxon>
        <taxon>Thermoproteaceae</taxon>
        <taxon>Pyrobaculum</taxon>
    </lineage>
</organism>
<reference key="1">
    <citation type="submission" date="2007-04" db="EMBL/GenBank/DDBJ databases">
        <title>Complete sequence of Pyrobaculum arsenaticum DSM 13514.</title>
        <authorList>
            <consortium name="US DOE Joint Genome Institute"/>
            <person name="Copeland A."/>
            <person name="Lucas S."/>
            <person name="Lapidus A."/>
            <person name="Barry K."/>
            <person name="Glavina del Rio T."/>
            <person name="Dalin E."/>
            <person name="Tice H."/>
            <person name="Pitluck S."/>
            <person name="Chain P."/>
            <person name="Malfatti S."/>
            <person name="Shin M."/>
            <person name="Vergez L."/>
            <person name="Schmutz J."/>
            <person name="Larimer F."/>
            <person name="Land M."/>
            <person name="Hauser L."/>
            <person name="Kyrpides N."/>
            <person name="Mikhailova N."/>
            <person name="Cozen A.E."/>
            <person name="Fitz-Gibbon S.T."/>
            <person name="House C.H."/>
            <person name="Saltikov C."/>
            <person name="Lowe T.M."/>
            <person name="Richardson P."/>
        </authorList>
    </citation>
    <scope>NUCLEOTIDE SEQUENCE [LARGE SCALE GENOMIC DNA]</scope>
    <source>
        <strain>ATCC 700994 / DSM 13514 / JCM 11321 / PZ6</strain>
    </source>
</reference>
<comment type="function">
    <text evidence="1">Tetrapolymerization of the monopyrrole PBG into the hydroxymethylbilane pre-uroporphyrinogen in several discrete steps.</text>
</comment>
<comment type="catalytic activity">
    <reaction evidence="1">
        <text>4 porphobilinogen + H2O = hydroxymethylbilane + 4 NH4(+)</text>
        <dbReference type="Rhea" id="RHEA:13185"/>
        <dbReference type="ChEBI" id="CHEBI:15377"/>
        <dbReference type="ChEBI" id="CHEBI:28938"/>
        <dbReference type="ChEBI" id="CHEBI:57845"/>
        <dbReference type="ChEBI" id="CHEBI:58126"/>
        <dbReference type="EC" id="2.5.1.61"/>
    </reaction>
</comment>
<comment type="cofactor">
    <cofactor evidence="1">
        <name>dipyrromethane</name>
        <dbReference type="ChEBI" id="CHEBI:60342"/>
    </cofactor>
    <text evidence="1">Binds 1 dipyrromethane group covalently.</text>
</comment>
<comment type="pathway">
    <text evidence="1">Porphyrin-containing compound metabolism; protoporphyrin-IX biosynthesis; coproporphyrinogen-III from 5-aminolevulinate: step 2/4.</text>
</comment>
<comment type="miscellaneous">
    <text evidence="1">The porphobilinogen subunits are added to the dipyrromethane group.</text>
</comment>
<comment type="similarity">
    <text evidence="1">Belongs to the HMBS family.</text>
</comment>
<name>HEM3_PYRAR</name>
<feature type="chain" id="PRO_0000304303" description="Probable porphobilinogen deaminase">
    <location>
        <begin position="1"/>
        <end position="297"/>
    </location>
</feature>
<feature type="modified residue" description="S-(dipyrrolylmethanemethyl)cysteine" evidence="1">
    <location>
        <position position="241"/>
    </location>
</feature>
<sequence>MRLVVATRGSKLSMLQTEELLAQIKAVEPSIEFEIKIVKTTGDEVQDKPLYQIGVKGIFEKEVNLAVLRGEADVAVHSLKDLPSELSPGLVLAGFSKRAPPFDAVVSTAGYVLETLPRGALVGTSSVRRAEFVKAIRPDVRVEPLRGNVDTRINKILQGKYDAAIMAVAGIYRLYGASPPIKLAVLRPEVLPPPPGQGIVAAVVREADSWLIDLLKKASDPKASLEAIAEREFLKAVGAGCHVAIGGVAFARNDTVEFIAGYASGGRKYIVRVVGDDPVEVGRRAAEEIRKFKDGDV</sequence>
<gene>
    <name evidence="1" type="primary">hemC</name>
    <name type="ordered locus">Pars_2245</name>
</gene>
<protein>
    <recommendedName>
        <fullName evidence="1">Probable porphobilinogen deaminase</fullName>
        <shortName evidence="1">PBG</shortName>
        <ecNumber evidence="1">2.5.1.61</ecNumber>
    </recommendedName>
    <alternativeName>
        <fullName evidence="1">Hydroxymethylbilane synthase</fullName>
        <shortName evidence="1">HMBS</shortName>
    </alternativeName>
    <alternativeName>
        <fullName evidence="1">Pre-uroporphyrinogen synthase</fullName>
    </alternativeName>
</protein>